<name>PARB_CAUVN</name>
<keyword id="KW-0002">3D-structure</keyword>
<keyword id="KW-0159">Chromosome partition</keyword>
<keyword id="KW-0963">Cytoplasm</keyword>
<keyword id="KW-0238">DNA-binding</keyword>
<keyword id="KW-1185">Reference proteome</keyword>
<dbReference type="EMBL" id="U87804">
    <property type="protein sequence ID" value="AAB51268.1"/>
    <property type="status" value="ALT_INIT"/>
    <property type="molecule type" value="Genomic_DNA"/>
</dbReference>
<dbReference type="EMBL" id="CP001340">
    <property type="protein sequence ID" value="ACL97333.2"/>
    <property type="molecule type" value="Genomic_DNA"/>
</dbReference>
<dbReference type="RefSeq" id="WP_024266006.1">
    <property type="nucleotide sequence ID" value="NC_011916.1"/>
</dbReference>
<dbReference type="RefSeq" id="YP_002519241.4">
    <property type="nucleotide sequence ID" value="NC_011916.1"/>
</dbReference>
<dbReference type="PDB" id="6S6H">
    <property type="method" value="X-ray"/>
    <property type="resolution" value="2.40 A"/>
    <property type="chains" value="A/B=126-254"/>
</dbReference>
<dbReference type="PDB" id="6T1F">
    <property type="method" value="X-ray"/>
    <property type="resolution" value="2.90 A"/>
    <property type="chains" value="A/B/C/D=11-254"/>
</dbReference>
<dbReference type="PDB" id="7BM8">
    <property type="method" value="X-ray"/>
    <property type="resolution" value="2.73 A"/>
    <property type="chains" value="A/B=11-254"/>
</dbReference>
<dbReference type="PDBsum" id="6S6H"/>
<dbReference type="PDBsum" id="6T1F"/>
<dbReference type="PDBsum" id="7BM8"/>
<dbReference type="SMR" id="B8GW30"/>
<dbReference type="IntAct" id="B8GW30">
    <property type="interactions" value="1"/>
</dbReference>
<dbReference type="MINT" id="B8GW30"/>
<dbReference type="GeneID" id="7332716"/>
<dbReference type="KEGG" id="ccs:CCNA_03868"/>
<dbReference type="PATRIC" id="fig|565050.3.peg.3773"/>
<dbReference type="HOGENOM" id="CLU_023853_0_0_5"/>
<dbReference type="OrthoDB" id="9802051at2"/>
<dbReference type="Proteomes" id="UP000001364">
    <property type="component" value="Chromosome"/>
</dbReference>
<dbReference type="GO" id="GO:0005694">
    <property type="term" value="C:chromosome"/>
    <property type="evidence" value="ECO:0007669"/>
    <property type="project" value="TreeGrafter"/>
</dbReference>
<dbReference type="GO" id="GO:0005737">
    <property type="term" value="C:cytoplasm"/>
    <property type="evidence" value="ECO:0007669"/>
    <property type="project" value="UniProtKB-SubCell"/>
</dbReference>
<dbReference type="GO" id="GO:0003677">
    <property type="term" value="F:DNA binding"/>
    <property type="evidence" value="ECO:0007669"/>
    <property type="project" value="UniProtKB-KW"/>
</dbReference>
<dbReference type="GO" id="GO:0007059">
    <property type="term" value="P:chromosome segregation"/>
    <property type="evidence" value="ECO:0007669"/>
    <property type="project" value="UniProtKB-KW"/>
</dbReference>
<dbReference type="GO" id="GO:0045881">
    <property type="term" value="P:positive regulation of sporulation resulting in formation of a cellular spore"/>
    <property type="evidence" value="ECO:0007669"/>
    <property type="project" value="TreeGrafter"/>
</dbReference>
<dbReference type="CDD" id="cd16393">
    <property type="entry name" value="SPO0J_N"/>
    <property type="match status" value="1"/>
</dbReference>
<dbReference type="FunFam" id="1.10.10.2830:FF:000001">
    <property type="entry name" value="Chromosome partitioning protein ParB"/>
    <property type="match status" value="1"/>
</dbReference>
<dbReference type="FunFam" id="3.90.1530.30:FF:000001">
    <property type="entry name" value="Chromosome partitioning protein ParB"/>
    <property type="match status" value="1"/>
</dbReference>
<dbReference type="Gene3D" id="1.10.10.2830">
    <property type="match status" value="1"/>
</dbReference>
<dbReference type="Gene3D" id="3.90.1530.30">
    <property type="match status" value="1"/>
</dbReference>
<dbReference type="InterPro" id="IPR050336">
    <property type="entry name" value="Chromosome_partition/occlusion"/>
</dbReference>
<dbReference type="InterPro" id="IPR041468">
    <property type="entry name" value="HTH_ParB/Spo0J"/>
</dbReference>
<dbReference type="InterPro" id="IPR004437">
    <property type="entry name" value="ParB/RepB/Spo0J"/>
</dbReference>
<dbReference type="InterPro" id="IPR003115">
    <property type="entry name" value="ParB/Sulfiredoxin_dom"/>
</dbReference>
<dbReference type="InterPro" id="IPR036086">
    <property type="entry name" value="ParB/Sulfiredoxin_sf"/>
</dbReference>
<dbReference type="InterPro" id="IPR057240">
    <property type="entry name" value="ParB_dimer_C"/>
</dbReference>
<dbReference type="NCBIfam" id="TIGR00180">
    <property type="entry name" value="parB_part"/>
    <property type="match status" value="1"/>
</dbReference>
<dbReference type="PANTHER" id="PTHR33375">
    <property type="entry name" value="CHROMOSOME-PARTITIONING PROTEIN PARB-RELATED"/>
    <property type="match status" value="1"/>
</dbReference>
<dbReference type="PANTHER" id="PTHR33375:SF1">
    <property type="entry name" value="CHROMOSOME-PARTITIONING PROTEIN PARB-RELATED"/>
    <property type="match status" value="1"/>
</dbReference>
<dbReference type="Pfam" id="PF17762">
    <property type="entry name" value="HTH_ParB"/>
    <property type="match status" value="1"/>
</dbReference>
<dbReference type="Pfam" id="PF23552">
    <property type="entry name" value="ParB_dimer"/>
    <property type="match status" value="1"/>
</dbReference>
<dbReference type="Pfam" id="PF02195">
    <property type="entry name" value="ParBc"/>
    <property type="match status" value="1"/>
</dbReference>
<dbReference type="SMART" id="SM00470">
    <property type="entry name" value="ParB"/>
    <property type="match status" value="1"/>
</dbReference>
<dbReference type="SUPFAM" id="SSF109709">
    <property type="entry name" value="KorB DNA-binding domain-like"/>
    <property type="match status" value="1"/>
</dbReference>
<dbReference type="SUPFAM" id="SSF110849">
    <property type="entry name" value="ParB/Sulfiredoxin"/>
    <property type="match status" value="1"/>
</dbReference>
<sequence length="304" mass="32809">MESVVVGEPGMSEGRRGLGRGLSALLGEVDAAPAQAPGEQLGGSREAPIEILQRNPDQPRRTFREEDLEDLSNSIREKGVLQPILVRPSPDTAGEYQIVAGERRWRAAQRAGLKTVPIMVRELDDLAVLEIGIIENVQRADLNVLEEALSYKVLMEKFERTQENIAQTIGKSRSHVANTMRLLALPDEVQSYLVSGELTAGHARAIAAAADPVALAKQIIEGGLSVRETEALARKAPNLSAGKSKGGRPPRVKDTDTQALESDLSSVLGLDVSIDHRGSTGTLTITYATLEQLDDLCNRLTRGI</sequence>
<protein>
    <recommendedName>
        <fullName evidence="3">Chromosome-partitioning protein ParB</fullName>
    </recommendedName>
</protein>
<gene>
    <name evidence="3" type="primary">parB</name>
    <name type="ordered locus">CCNA_03868</name>
</gene>
<evidence type="ECO:0000256" key="1">
    <source>
        <dbReference type="SAM" id="MobiDB-lite"/>
    </source>
</evidence>
<evidence type="ECO:0000269" key="2">
    <source>
    </source>
</evidence>
<evidence type="ECO:0000303" key="3">
    <source>
    </source>
</evidence>
<evidence type="ECO:0000305" key="4"/>
<evidence type="ECO:0007829" key="5">
    <source>
        <dbReference type="PDB" id="6S6H"/>
    </source>
</evidence>
<evidence type="ECO:0007829" key="6">
    <source>
        <dbReference type="PDB" id="6T1F"/>
    </source>
</evidence>
<evidence type="ECO:0007829" key="7">
    <source>
        <dbReference type="PDB" id="7BM8"/>
    </source>
</evidence>
<feature type="chain" id="PRO_0000378301" description="Chromosome-partitioning protein ParB">
    <location>
        <begin position="1"/>
        <end position="304"/>
    </location>
</feature>
<feature type="region of interest" description="Disordered" evidence="1">
    <location>
        <begin position="236"/>
        <end position="257"/>
    </location>
</feature>
<feature type="sequence conflict" description="In Ref. 1; AAB51268." evidence="4" ref="1">
    <original>LLGEVDAAPAQA</original>
    <variation>CWASRRRAGSG</variation>
    <location>
        <begin position="25"/>
        <end position="36"/>
    </location>
</feature>
<feature type="sequence conflict" description="In Ref. 1; AAB51268." evidence="4" ref="1">
    <original>L</original>
    <variation>F</variation>
    <location>
        <position position="41"/>
    </location>
</feature>
<feature type="strand" evidence="7">
    <location>
        <begin position="45"/>
        <end position="48"/>
    </location>
</feature>
<feature type="helix" evidence="7">
    <location>
        <begin position="49"/>
        <end position="51"/>
    </location>
</feature>
<feature type="strand" evidence="7">
    <location>
        <begin position="52"/>
        <end position="54"/>
    </location>
</feature>
<feature type="helix" evidence="7">
    <location>
        <begin position="65"/>
        <end position="78"/>
    </location>
</feature>
<feature type="strand" evidence="7">
    <location>
        <begin position="84"/>
        <end position="88"/>
    </location>
</feature>
<feature type="strand" evidence="7">
    <location>
        <begin position="90"/>
        <end position="92"/>
    </location>
</feature>
<feature type="strand" evidence="7">
    <location>
        <begin position="96"/>
        <end position="100"/>
    </location>
</feature>
<feature type="helix" evidence="7">
    <location>
        <begin position="102"/>
        <end position="110"/>
    </location>
</feature>
<feature type="strand" evidence="7">
    <location>
        <begin position="114"/>
        <end position="120"/>
    </location>
</feature>
<feature type="helix" evidence="5">
    <location>
        <begin position="128"/>
        <end position="135"/>
    </location>
</feature>
<feature type="turn" evidence="5">
    <location>
        <begin position="136"/>
        <end position="139"/>
    </location>
</feature>
<feature type="helix" evidence="5">
    <location>
        <begin position="144"/>
        <end position="158"/>
    </location>
</feature>
<feature type="helix" evidence="5">
    <location>
        <begin position="162"/>
        <end position="169"/>
    </location>
</feature>
<feature type="helix" evidence="5">
    <location>
        <begin position="173"/>
        <end position="181"/>
    </location>
</feature>
<feature type="helix" evidence="5">
    <location>
        <begin position="182"/>
        <end position="184"/>
    </location>
</feature>
<feature type="helix" evidence="5">
    <location>
        <begin position="187"/>
        <end position="195"/>
    </location>
</feature>
<feature type="strand" evidence="6">
    <location>
        <begin position="196"/>
        <end position="198"/>
    </location>
</feature>
<feature type="helix" evidence="5">
    <location>
        <begin position="200"/>
        <end position="205"/>
    </location>
</feature>
<feature type="turn" evidence="5">
    <location>
        <begin position="206"/>
        <end position="208"/>
    </location>
</feature>
<feature type="strand" evidence="7">
    <location>
        <begin position="209"/>
        <end position="211"/>
    </location>
</feature>
<feature type="helix" evidence="5">
    <location>
        <begin position="212"/>
        <end position="222"/>
    </location>
</feature>
<feature type="helix" evidence="5">
    <location>
        <begin position="226"/>
        <end position="234"/>
    </location>
</feature>
<feature type="turn" evidence="5">
    <location>
        <begin position="238"/>
        <end position="241"/>
    </location>
</feature>
<reference key="1">
    <citation type="journal article" date="1997" name="Cell">
        <title>Cell cycle-dependent polar localization of chromosome partitioning proteins in Caulobacter crescentus.</title>
        <authorList>
            <person name="Mohl D.A."/>
            <person name="Gober J.W."/>
        </authorList>
    </citation>
    <scope>NUCLEOTIDE SEQUENCE [GENOMIC DNA]</scope>
    <scope>FUNCTION</scope>
    <scope>DNA-BINDING</scope>
    <scope>SUBCELLULAR LOCATION</scope>
</reference>
<reference key="2">
    <citation type="journal article" date="2010" name="J. Bacteriol.">
        <title>The genetic basis of laboratory adaptation in Caulobacter crescentus.</title>
        <authorList>
            <person name="Marks M.E."/>
            <person name="Castro-Rojas C.M."/>
            <person name="Teiling C."/>
            <person name="Du L."/>
            <person name="Kapatral V."/>
            <person name="Walunas T.L."/>
            <person name="Crosson S."/>
        </authorList>
    </citation>
    <scope>NUCLEOTIDE SEQUENCE [LARGE SCALE GENOMIC DNA]</scope>
    <source>
        <strain>NA1000 / CB15N</strain>
    </source>
</reference>
<proteinExistence type="evidence at protein level"/>
<accession>B8GW30</accession>
<accession>O05190</accession>
<organism>
    <name type="scientific">Caulobacter vibrioides (strain NA1000 / CB15N)</name>
    <name type="common">Caulobacter crescentus</name>
    <dbReference type="NCBI Taxonomy" id="565050"/>
    <lineage>
        <taxon>Bacteria</taxon>
        <taxon>Pseudomonadati</taxon>
        <taxon>Pseudomonadota</taxon>
        <taxon>Alphaproteobacteria</taxon>
        <taxon>Caulobacterales</taxon>
        <taxon>Caulobacteraceae</taxon>
        <taxon>Caulobacter</taxon>
    </lineage>
</organism>
<comment type="function">
    <text evidence="2">Involved in chromosome partition. Localize to both poles of the predivisional cell following completion of DNA replication. Binds to the DNA origin of replication.</text>
</comment>
<comment type="subcellular location">
    <subcellularLocation>
        <location evidence="2">Cytoplasm</location>
    </subcellularLocation>
    <text evidence="2">Subcellular distribution changes during the cell cycle. In swarmer cells, where DNA replication does not occur, ParB is for the most part distributed throughout the cell. As DNA replication proceeds, ParB begins to concentrate at one pole of the predivisional cell. Finally, in late predivisional cells, following the completion of DNA replication, ParB is distributed to both poles of the cell.</text>
</comment>
<comment type="similarity">
    <text evidence="4">Belongs to the ParB family.</text>
</comment>
<comment type="sequence caution" evidence="4">
    <conflict type="erroneous initiation">
        <sequence resource="EMBL-CDS" id="AAB51268"/>
    </conflict>
    <text>Truncated N-terminus.</text>
</comment>